<reference key="1">
    <citation type="submission" date="2007-05" db="EMBL/GenBank/DDBJ databases">
        <title>Complete sequence of chromosome of Psychrobacter sp. PRwf-1.</title>
        <authorList>
            <consortium name="US DOE Joint Genome Institute"/>
            <person name="Copeland A."/>
            <person name="Lucas S."/>
            <person name="Lapidus A."/>
            <person name="Barry K."/>
            <person name="Detter J.C."/>
            <person name="Glavina del Rio T."/>
            <person name="Hammon N."/>
            <person name="Israni S."/>
            <person name="Dalin E."/>
            <person name="Tice H."/>
            <person name="Pitluck S."/>
            <person name="Chain P."/>
            <person name="Malfatti S."/>
            <person name="Shin M."/>
            <person name="Vergez L."/>
            <person name="Schmutz J."/>
            <person name="Larimer F."/>
            <person name="Land M."/>
            <person name="Hauser L."/>
            <person name="Kyrpides N."/>
            <person name="Kim E."/>
            <person name="Tiedje J."/>
            <person name="Richardson P."/>
        </authorList>
    </citation>
    <scope>NUCLEOTIDE SEQUENCE [LARGE SCALE GENOMIC DNA]</scope>
    <source>
        <strain>PRwf-1</strain>
    </source>
</reference>
<comment type="function">
    <text evidence="1">Catalyzes the interconversion of L-alanine and D-alanine. May also act on other amino acids.</text>
</comment>
<comment type="catalytic activity">
    <reaction evidence="1">
        <text>L-alanine = D-alanine</text>
        <dbReference type="Rhea" id="RHEA:20249"/>
        <dbReference type="ChEBI" id="CHEBI:57416"/>
        <dbReference type="ChEBI" id="CHEBI:57972"/>
        <dbReference type="EC" id="5.1.1.1"/>
    </reaction>
</comment>
<comment type="cofactor">
    <cofactor evidence="1">
        <name>pyridoxal 5'-phosphate</name>
        <dbReference type="ChEBI" id="CHEBI:597326"/>
    </cofactor>
</comment>
<comment type="pathway">
    <text evidence="1">Amino-acid biosynthesis; D-alanine biosynthesis; D-alanine from L-alanine: step 1/1.</text>
</comment>
<comment type="similarity">
    <text evidence="1">Belongs to the alanine racemase family.</text>
</comment>
<gene>
    <name type="primary">alr</name>
    <name type="ordered locus">PsycPRwf_0782</name>
</gene>
<evidence type="ECO:0000255" key="1">
    <source>
        <dbReference type="HAMAP-Rule" id="MF_01201"/>
    </source>
</evidence>
<sequence>MRSASIILDSKALTHNLNCVIDTVPDTTKVLAMVKADAYGHGIAHCLPALKDADGLGVACFTEAQHIRELGWDKILVLIEGVFSETEWQQSIEAQCQSIIHHQDQVQWALNHLPPENSPCRTVWLKLNTGMNRLGFESDELGDVAQSLVDAGYELILTSHFANADAPNHPSNAKQIDTFTQALQQLREQVDPSIKASLCNSAGILNFKACHFDWVRPGIMLYGSSPVEGVSAQMLKLKPVMSFKASLMAIHNIAAGTSVGYGSRFVANRPIVKGIVSIGYGDGYPRVVDGSAWVSVQLAGEHSSYKCPVIGRVAMDMIAIDLTDVPNPKVGSQVMLWGDPELGAPSVDEIAESAHTLGYELLCRVTQRPLREVL</sequence>
<accession>A5WDJ3</accession>
<dbReference type="EC" id="5.1.1.1" evidence="1"/>
<dbReference type="EMBL" id="CP000713">
    <property type="protein sequence ID" value="ABQ93734.1"/>
    <property type="molecule type" value="Genomic_DNA"/>
</dbReference>
<dbReference type="SMR" id="A5WDJ3"/>
<dbReference type="STRING" id="349106.PsycPRwf_0782"/>
<dbReference type="KEGG" id="prw:PsycPRwf_0782"/>
<dbReference type="eggNOG" id="COG0787">
    <property type="taxonomic scope" value="Bacteria"/>
</dbReference>
<dbReference type="HOGENOM" id="CLU_028393_1_0_6"/>
<dbReference type="UniPathway" id="UPA00042">
    <property type="reaction ID" value="UER00497"/>
</dbReference>
<dbReference type="GO" id="GO:0005829">
    <property type="term" value="C:cytosol"/>
    <property type="evidence" value="ECO:0007669"/>
    <property type="project" value="TreeGrafter"/>
</dbReference>
<dbReference type="GO" id="GO:0008784">
    <property type="term" value="F:alanine racemase activity"/>
    <property type="evidence" value="ECO:0007669"/>
    <property type="project" value="UniProtKB-UniRule"/>
</dbReference>
<dbReference type="GO" id="GO:0030170">
    <property type="term" value="F:pyridoxal phosphate binding"/>
    <property type="evidence" value="ECO:0007669"/>
    <property type="project" value="UniProtKB-UniRule"/>
</dbReference>
<dbReference type="GO" id="GO:0030632">
    <property type="term" value="P:D-alanine biosynthetic process"/>
    <property type="evidence" value="ECO:0007669"/>
    <property type="project" value="UniProtKB-UniRule"/>
</dbReference>
<dbReference type="CDD" id="cd06827">
    <property type="entry name" value="PLPDE_III_AR_proteobact"/>
    <property type="match status" value="1"/>
</dbReference>
<dbReference type="FunFam" id="3.20.20.10:FF:000002">
    <property type="entry name" value="Alanine racemase"/>
    <property type="match status" value="1"/>
</dbReference>
<dbReference type="Gene3D" id="3.20.20.10">
    <property type="entry name" value="Alanine racemase"/>
    <property type="match status" value="1"/>
</dbReference>
<dbReference type="Gene3D" id="2.40.37.10">
    <property type="entry name" value="Lyase, Ornithine Decarboxylase, Chain A, domain 1"/>
    <property type="match status" value="1"/>
</dbReference>
<dbReference type="HAMAP" id="MF_01201">
    <property type="entry name" value="Ala_racemase"/>
    <property type="match status" value="1"/>
</dbReference>
<dbReference type="InterPro" id="IPR000821">
    <property type="entry name" value="Ala_racemase"/>
</dbReference>
<dbReference type="InterPro" id="IPR009006">
    <property type="entry name" value="Ala_racemase/Decarboxylase_C"/>
</dbReference>
<dbReference type="InterPro" id="IPR011079">
    <property type="entry name" value="Ala_racemase_C"/>
</dbReference>
<dbReference type="InterPro" id="IPR001608">
    <property type="entry name" value="Ala_racemase_N"/>
</dbReference>
<dbReference type="InterPro" id="IPR029066">
    <property type="entry name" value="PLP-binding_barrel"/>
</dbReference>
<dbReference type="NCBIfam" id="TIGR00492">
    <property type="entry name" value="alr"/>
    <property type="match status" value="1"/>
</dbReference>
<dbReference type="PANTHER" id="PTHR30511">
    <property type="entry name" value="ALANINE RACEMASE"/>
    <property type="match status" value="1"/>
</dbReference>
<dbReference type="PANTHER" id="PTHR30511:SF0">
    <property type="entry name" value="ALANINE RACEMASE, CATABOLIC-RELATED"/>
    <property type="match status" value="1"/>
</dbReference>
<dbReference type="Pfam" id="PF00842">
    <property type="entry name" value="Ala_racemase_C"/>
    <property type="match status" value="1"/>
</dbReference>
<dbReference type="Pfam" id="PF01168">
    <property type="entry name" value="Ala_racemase_N"/>
    <property type="match status" value="1"/>
</dbReference>
<dbReference type="PRINTS" id="PR00992">
    <property type="entry name" value="ALARACEMASE"/>
</dbReference>
<dbReference type="SMART" id="SM01005">
    <property type="entry name" value="Ala_racemase_C"/>
    <property type="match status" value="1"/>
</dbReference>
<dbReference type="SUPFAM" id="SSF50621">
    <property type="entry name" value="Alanine racemase C-terminal domain-like"/>
    <property type="match status" value="1"/>
</dbReference>
<dbReference type="SUPFAM" id="SSF51419">
    <property type="entry name" value="PLP-binding barrel"/>
    <property type="match status" value="1"/>
</dbReference>
<feature type="chain" id="PRO_1000073099" description="Alanine racemase">
    <location>
        <begin position="1"/>
        <end position="374"/>
    </location>
</feature>
<feature type="active site" description="Proton acceptor; specific for D-alanine" evidence="1">
    <location>
        <position position="35"/>
    </location>
</feature>
<feature type="active site" description="Proton acceptor; specific for L-alanine" evidence="1">
    <location>
        <position position="261"/>
    </location>
</feature>
<feature type="binding site" evidence="1">
    <location>
        <position position="133"/>
    </location>
    <ligand>
        <name>substrate</name>
    </ligand>
</feature>
<feature type="binding site" evidence="1">
    <location>
        <position position="315"/>
    </location>
    <ligand>
        <name>substrate</name>
    </ligand>
</feature>
<feature type="modified residue" description="N6-(pyridoxal phosphate)lysine" evidence="1">
    <location>
        <position position="35"/>
    </location>
</feature>
<protein>
    <recommendedName>
        <fullName evidence="1">Alanine racemase</fullName>
        <ecNumber evidence="1">5.1.1.1</ecNumber>
    </recommendedName>
</protein>
<keyword id="KW-0413">Isomerase</keyword>
<keyword id="KW-0663">Pyridoxal phosphate</keyword>
<proteinExistence type="inferred from homology"/>
<organism>
    <name type="scientific">Psychrobacter sp. (strain PRwf-1)</name>
    <dbReference type="NCBI Taxonomy" id="349106"/>
    <lineage>
        <taxon>Bacteria</taxon>
        <taxon>Pseudomonadati</taxon>
        <taxon>Pseudomonadota</taxon>
        <taxon>Gammaproteobacteria</taxon>
        <taxon>Moraxellales</taxon>
        <taxon>Moraxellaceae</taxon>
        <taxon>Psychrobacter</taxon>
    </lineage>
</organism>
<name>ALR_PSYWF</name>